<dbReference type="EC" id="5.1.1.7" evidence="1"/>
<dbReference type="EMBL" id="CP000521">
    <property type="protein sequence ID" value="ABO13048.2"/>
    <property type="molecule type" value="Genomic_DNA"/>
</dbReference>
<dbReference type="RefSeq" id="WP_000923478.1">
    <property type="nucleotide sequence ID" value="NZ_CACVBA010000001.1"/>
</dbReference>
<dbReference type="SMR" id="A3M804"/>
<dbReference type="KEGG" id="acb:A1S_2631"/>
<dbReference type="HOGENOM" id="CLU_053306_1_1_6"/>
<dbReference type="UniPathway" id="UPA00034">
    <property type="reaction ID" value="UER00025"/>
</dbReference>
<dbReference type="GO" id="GO:0005829">
    <property type="term" value="C:cytosol"/>
    <property type="evidence" value="ECO:0007669"/>
    <property type="project" value="TreeGrafter"/>
</dbReference>
<dbReference type="GO" id="GO:0008837">
    <property type="term" value="F:diaminopimelate epimerase activity"/>
    <property type="evidence" value="ECO:0007669"/>
    <property type="project" value="UniProtKB-UniRule"/>
</dbReference>
<dbReference type="GO" id="GO:0009089">
    <property type="term" value="P:lysine biosynthetic process via diaminopimelate"/>
    <property type="evidence" value="ECO:0007669"/>
    <property type="project" value="UniProtKB-UniRule"/>
</dbReference>
<dbReference type="FunFam" id="3.10.310.10:FF:000001">
    <property type="entry name" value="Diaminopimelate epimerase"/>
    <property type="match status" value="1"/>
</dbReference>
<dbReference type="Gene3D" id="3.10.310.10">
    <property type="entry name" value="Diaminopimelate Epimerase, Chain A, domain 1"/>
    <property type="match status" value="2"/>
</dbReference>
<dbReference type="HAMAP" id="MF_00197">
    <property type="entry name" value="DAP_epimerase"/>
    <property type="match status" value="1"/>
</dbReference>
<dbReference type="InterPro" id="IPR018510">
    <property type="entry name" value="DAP_epimerase_AS"/>
</dbReference>
<dbReference type="InterPro" id="IPR001653">
    <property type="entry name" value="DAP_epimerase_DapF"/>
</dbReference>
<dbReference type="NCBIfam" id="TIGR00652">
    <property type="entry name" value="DapF"/>
    <property type="match status" value="1"/>
</dbReference>
<dbReference type="PANTHER" id="PTHR31689:SF0">
    <property type="entry name" value="DIAMINOPIMELATE EPIMERASE"/>
    <property type="match status" value="1"/>
</dbReference>
<dbReference type="PANTHER" id="PTHR31689">
    <property type="entry name" value="DIAMINOPIMELATE EPIMERASE, CHLOROPLASTIC"/>
    <property type="match status" value="1"/>
</dbReference>
<dbReference type="Pfam" id="PF01678">
    <property type="entry name" value="DAP_epimerase"/>
    <property type="match status" value="2"/>
</dbReference>
<dbReference type="SUPFAM" id="SSF54506">
    <property type="entry name" value="Diaminopimelate epimerase-like"/>
    <property type="match status" value="1"/>
</dbReference>
<dbReference type="PROSITE" id="PS01326">
    <property type="entry name" value="DAP_EPIMERASE"/>
    <property type="match status" value="1"/>
</dbReference>
<sequence>MLLEFTKMHGLGNDFMVVDLISQRAYLDTATIQRLADRHFGVGFDQLLIVEPPDVPEADFKYRIFNADGSEVEQCGNGVRCFARFVHERHLTNKTNITVQTKAGIVKPELGQNGWVRVNMGYPKFLPNEIPFVADEPEALYTLELANDQNISIDVVNMGNPHAVTIVPDVLTADVAGIGPQVELHKRFPERVNAGFMQVIDDKHVRLRVFERGVGETLACGTGACAAAVSGMRRGLLANSVEVELAGGKLQIEWQEGDVVWMTGPTTHVYDGRLDLRYFQG</sequence>
<name>DAPF_ACIBT</name>
<evidence type="ECO:0000255" key="1">
    <source>
        <dbReference type="HAMAP-Rule" id="MF_00197"/>
    </source>
</evidence>
<protein>
    <recommendedName>
        <fullName evidence="1">Diaminopimelate epimerase</fullName>
        <shortName evidence="1">DAP epimerase</shortName>
        <ecNumber evidence="1">5.1.1.7</ecNumber>
    </recommendedName>
    <alternativeName>
        <fullName evidence="1">PLP-independent amino acid racemase</fullName>
    </alternativeName>
</protein>
<proteinExistence type="inferred from homology"/>
<comment type="function">
    <text evidence="1">Catalyzes the stereoinversion of LL-2,6-diaminopimelate (L,L-DAP) to meso-diaminopimelate (meso-DAP), a precursor of L-lysine and an essential component of the bacterial peptidoglycan.</text>
</comment>
<comment type="catalytic activity">
    <reaction evidence="1">
        <text>(2S,6S)-2,6-diaminopimelate = meso-2,6-diaminopimelate</text>
        <dbReference type="Rhea" id="RHEA:15393"/>
        <dbReference type="ChEBI" id="CHEBI:57609"/>
        <dbReference type="ChEBI" id="CHEBI:57791"/>
        <dbReference type="EC" id="5.1.1.7"/>
    </reaction>
</comment>
<comment type="pathway">
    <text evidence="1">Amino-acid biosynthesis; L-lysine biosynthesis via DAP pathway; DL-2,6-diaminopimelate from LL-2,6-diaminopimelate: step 1/1.</text>
</comment>
<comment type="subunit">
    <text evidence="1">Homodimer.</text>
</comment>
<comment type="subcellular location">
    <subcellularLocation>
        <location evidence="1">Cytoplasm</location>
    </subcellularLocation>
</comment>
<comment type="similarity">
    <text evidence="1">Belongs to the diaminopimelate epimerase family.</text>
</comment>
<accession>A3M804</accession>
<keyword id="KW-0028">Amino-acid biosynthesis</keyword>
<keyword id="KW-0963">Cytoplasm</keyword>
<keyword id="KW-0413">Isomerase</keyword>
<keyword id="KW-0457">Lysine biosynthesis</keyword>
<organism>
    <name type="scientific">Acinetobacter baumannii (strain ATCC 17978 / DSM 105126 / CIP 53.77 / LMG 1025 / NCDC KC755 / 5377)</name>
    <dbReference type="NCBI Taxonomy" id="400667"/>
    <lineage>
        <taxon>Bacteria</taxon>
        <taxon>Pseudomonadati</taxon>
        <taxon>Pseudomonadota</taxon>
        <taxon>Gammaproteobacteria</taxon>
        <taxon>Moraxellales</taxon>
        <taxon>Moraxellaceae</taxon>
        <taxon>Acinetobacter</taxon>
        <taxon>Acinetobacter calcoaceticus/baumannii complex</taxon>
    </lineage>
</organism>
<reference key="1">
    <citation type="journal article" date="2007" name="Genes Dev.">
        <title>New insights into Acinetobacter baumannii pathogenesis revealed by high-density pyrosequencing and transposon mutagenesis.</title>
        <authorList>
            <person name="Smith M.G."/>
            <person name="Gianoulis T.A."/>
            <person name="Pukatzki S."/>
            <person name="Mekalanos J.J."/>
            <person name="Ornston L.N."/>
            <person name="Gerstein M."/>
            <person name="Snyder M."/>
        </authorList>
    </citation>
    <scope>NUCLEOTIDE SEQUENCE [LARGE SCALE GENOMIC DNA]</scope>
    <source>
        <strain>ATCC 17978 / DSM 105126 / CIP 53.77 / LMG 1025 / NCDC KC755 / 5377</strain>
    </source>
</reference>
<feature type="chain" id="PRO_1000099214" description="Diaminopimelate epimerase">
    <location>
        <begin position="1"/>
        <end position="281"/>
    </location>
</feature>
<feature type="active site" description="Proton donor" evidence="1">
    <location>
        <position position="75"/>
    </location>
</feature>
<feature type="active site" description="Proton acceptor" evidence="1">
    <location>
        <position position="220"/>
    </location>
</feature>
<feature type="binding site" evidence="1">
    <location>
        <position position="13"/>
    </location>
    <ligand>
        <name>substrate</name>
    </ligand>
</feature>
<feature type="binding site" evidence="1">
    <location>
        <position position="46"/>
    </location>
    <ligand>
        <name>substrate</name>
    </ligand>
</feature>
<feature type="binding site" evidence="1">
    <location>
        <position position="66"/>
    </location>
    <ligand>
        <name>substrate</name>
    </ligand>
</feature>
<feature type="binding site" evidence="1">
    <location>
        <begin position="76"/>
        <end position="77"/>
    </location>
    <ligand>
        <name>substrate</name>
    </ligand>
</feature>
<feature type="binding site" evidence="1">
    <location>
        <position position="160"/>
    </location>
    <ligand>
        <name>substrate</name>
    </ligand>
</feature>
<feature type="binding site" evidence="1">
    <location>
        <position position="193"/>
    </location>
    <ligand>
        <name>substrate</name>
    </ligand>
</feature>
<feature type="binding site" evidence="1">
    <location>
        <begin position="211"/>
        <end position="212"/>
    </location>
    <ligand>
        <name>substrate</name>
    </ligand>
</feature>
<feature type="binding site" evidence="1">
    <location>
        <begin position="221"/>
        <end position="222"/>
    </location>
    <ligand>
        <name>substrate</name>
    </ligand>
</feature>
<feature type="site" description="Could be important to modulate the pK values of the two catalytic cysteine residues" evidence="1">
    <location>
        <position position="162"/>
    </location>
</feature>
<feature type="site" description="Could be important to modulate the pK values of the two catalytic cysteine residues" evidence="1">
    <location>
        <position position="211"/>
    </location>
</feature>
<feature type="site" description="Important for dimerization" evidence="1">
    <location>
        <position position="270"/>
    </location>
</feature>
<gene>
    <name evidence="1" type="primary">dapF</name>
    <name type="ordered locus">A1S_2631</name>
</gene>